<evidence type="ECO:0000255" key="1">
    <source>
        <dbReference type="HAMAP-Rule" id="MF_03008"/>
    </source>
</evidence>
<gene>
    <name evidence="1" type="primary">TIF34</name>
    <name type="ORF">SNOG_01594</name>
</gene>
<reference key="1">
    <citation type="journal article" date="2007" name="Plant Cell">
        <title>Dothideomycete-plant interactions illuminated by genome sequencing and EST analysis of the wheat pathogen Stagonospora nodorum.</title>
        <authorList>
            <person name="Hane J.K."/>
            <person name="Lowe R.G.T."/>
            <person name="Solomon P.S."/>
            <person name="Tan K.-C."/>
            <person name="Schoch C.L."/>
            <person name="Spatafora J.W."/>
            <person name="Crous P.W."/>
            <person name="Kodira C.D."/>
            <person name="Birren B.W."/>
            <person name="Galagan J.E."/>
            <person name="Torriani S.F.F."/>
            <person name="McDonald B.A."/>
            <person name="Oliver R.P."/>
        </authorList>
    </citation>
    <scope>NUCLEOTIDE SEQUENCE [LARGE SCALE GENOMIC DNA]</scope>
    <source>
        <strain>SN15 / ATCC MYA-4574 / FGSC 10173</strain>
    </source>
</reference>
<dbReference type="EMBL" id="CH445326">
    <property type="protein sequence ID" value="EAT91243.2"/>
    <property type="molecule type" value="Genomic_DNA"/>
</dbReference>
<dbReference type="RefSeq" id="XP_001792230.1">
    <property type="nucleotide sequence ID" value="XM_001792178.1"/>
</dbReference>
<dbReference type="SMR" id="Q0V320"/>
<dbReference type="FunCoup" id="Q0V320">
    <property type="interactions" value="1008"/>
</dbReference>
<dbReference type="STRING" id="321614.Q0V320"/>
<dbReference type="EnsemblFungi" id="SNOT_01594">
    <property type="protein sequence ID" value="SNOT_01594"/>
    <property type="gene ID" value="SNOG_01594"/>
</dbReference>
<dbReference type="GeneID" id="5969075"/>
<dbReference type="KEGG" id="pno:SNOG_01594"/>
<dbReference type="VEuPathDB" id="FungiDB:JI435_015940"/>
<dbReference type="eggNOG" id="KOG0643">
    <property type="taxonomic scope" value="Eukaryota"/>
</dbReference>
<dbReference type="HOGENOM" id="CLU_043845_0_1_1"/>
<dbReference type="InParanoid" id="Q0V320"/>
<dbReference type="Proteomes" id="UP000001055">
    <property type="component" value="Unassembled WGS sequence"/>
</dbReference>
<dbReference type="GO" id="GO:0016282">
    <property type="term" value="C:eukaryotic 43S preinitiation complex"/>
    <property type="evidence" value="ECO:0007669"/>
    <property type="project" value="UniProtKB-UniRule"/>
</dbReference>
<dbReference type="GO" id="GO:0033290">
    <property type="term" value="C:eukaryotic 48S preinitiation complex"/>
    <property type="evidence" value="ECO:0007669"/>
    <property type="project" value="UniProtKB-UniRule"/>
</dbReference>
<dbReference type="GO" id="GO:0071540">
    <property type="term" value="C:eukaryotic translation initiation factor 3 complex, eIF3e"/>
    <property type="evidence" value="ECO:0007669"/>
    <property type="project" value="EnsemblFungi"/>
</dbReference>
<dbReference type="GO" id="GO:0071541">
    <property type="term" value="C:eukaryotic translation initiation factor 3 complex, eIF3m"/>
    <property type="evidence" value="ECO:0000318"/>
    <property type="project" value="GO_Central"/>
</dbReference>
<dbReference type="GO" id="GO:0034399">
    <property type="term" value="C:nuclear periphery"/>
    <property type="evidence" value="ECO:0007669"/>
    <property type="project" value="EnsemblFungi"/>
</dbReference>
<dbReference type="GO" id="GO:0003723">
    <property type="term" value="F:RNA binding"/>
    <property type="evidence" value="ECO:0000318"/>
    <property type="project" value="GO_Central"/>
</dbReference>
<dbReference type="GO" id="GO:0003743">
    <property type="term" value="F:translation initiation factor activity"/>
    <property type="evidence" value="ECO:0000318"/>
    <property type="project" value="GO_Central"/>
</dbReference>
<dbReference type="GO" id="GO:0002183">
    <property type="term" value="P:cytoplasmic translational initiation"/>
    <property type="evidence" value="ECO:0000318"/>
    <property type="project" value="GO_Central"/>
</dbReference>
<dbReference type="GO" id="GO:0001732">
    <property type="term" value="P:formation of cytoplasmic translation initiation complex"/>
    <property type="evidence" value="ECO:0007669"/>
    <property type="project" value="UniProtKB-UniRule"/>
</dbReference>
<dbReference type="Gene3D" id="2.130.10.10">
    <property type="entry name" value="YVTN repeat-like/Quinoprotein amine dehydrogenase"/>
    <property type="match status" value="1"/>
</dbReference>
<dbReference type="HAMAP" id="MF_03008">
    <property type="entry name" value="eIF3i"/>
    <property type="match status" value="1"/>
</dbReference>
<dbReference type="InterPro" id="IPR027525">
    <property type="entry name" value="eIF3i"/>
</dbReference>
<dbReference type="InterPro" id="IPR015943">
    <property type="entry name" value="WD40/YVTN_repeat-like_dom_sf"/>
</dbReference>
<dbReference type="InterPro" id="IPR019775">
    <property type="entry name" value="WD40_repeat_CS"/>
</dbReference>
<dbReference type="InterPro" id="IPR036322">
    <property type="entry name" value="WD40_repeat_dom_sf"/>
</dbReference>
<dbReference type="InterPro" id="IPR001680">
    <property type="entry name" value="WD40_rpt"/>
</dbReference>
<dbReference type="PANTHER" id="PTHR19877">
    <property type="entry name" value="EUKARYOTIC TRANSLATION INITIATION FACTOR 3 SUBUNIT I"/>
    <property type="match status" value="1"/>
</dbReference>
<dbReference type="PANTHER" id="PTHR19877:SF1">
    <property type="entry name" value="EUKARYOTIC TRANSLATION INITIATION FACTOR 3 SUBUNIT I"/>
    <property type="match status" value="1"/>
</dbReference>
<dbReference type="Pfam" id="PF24805">
    <property type="entry name" value="EIF3I"/>
    <property type="match status" value="1"/>
</dbReference>
<dbReference type="SMART" id="SM00320">
    <property type="entry name" value="WD40"/>
    <property type="match status" value="5"/>
</dbReference>
<dbReference type="SUPFAM" id="SSF50978">
    <property type="entry name" value="WD40 repeat-like"/>
    <property type="match status" value="1"/>
</dbReference>
<dbReference type="PROSITE" id="PS00678">
    <property type="entry name" value="WD_REPEATS_1"/>
    <property type="match status" value="1"/>
</dbReference>
<dbReference type="PROSITE" id="PS50082">
    <property type="entry name" value="WD_REPEATS_2"/>
    <property type="match status" value="1"/>
</dbReference>
<dbReference type="PROSITE" id="PS50294">
    <property type="entry name" value="WD_REPEATS_REGION"/>
    <property type="match status" value="1"/>
</dbReference>
<proteinExistence type="inferred from homology"/>
<keyword id="KW-0963">Cytoplasm</keyword>
<keyword id="KW-0396">Initiation factor</keyword>
<keyword id="KW-0648">Protein biosynthesis</keyword>
<keyword id="KW-0677">Repeat</keyword>
<keyword id="KW-0853">WD repeat</keyword>
<accession>Q0V320</accession>
<organism>
    <name type="scientific">Phaeosphaeria nodorum (strain SN15 / ATCC MYA-4574 / FGSC 10173)</name>
    <name type="common">Glume blotch fungus</name>
    <name type="synonym">Parastagonospora nodorum</name>
    <dbReference type="NCBI Taxonomy" id="321614"/>
    <lineage>
        <taxon>Eukaryota</taxon>
        <taxon>Fungi</taxon>
        <taxon>Dikarya</taxon>
        <taxon>Ascomycota</taxon>
        <taxon>Pezizomycotina</taxon>
        <taxon>Dothideomycetes</taxon>
        <taxon>Pleosporomycetidae</taxon>
        <taxon>Pleosporales</taxon>
        <taxon>Pleosporineae</taxon>
        <taxon>Phaeosphaeriaceae</taxon>
        <taxon>Parastagonospora</taxon>
    </lineage>
</organism>
<protein>
    <recommendedName>
        <fullName evidence="1">Eukaryotic translation initiation factor 3 subunit I</fullName>
        <shortName evidence="1">eIF3i</shortName>
    </recommendedName>
    <alternativeName>
        <fullName evidence="1">Eukaryotic translation initiation factor 3 39 kDa subunit homolog</fullName>
        <shortName evidence="1">eIF-3 39 kDa subunit homolog</shortName>
    </alternativeName>
</protein>
<comment type="function">
    <text evidence="1">Component of the eukaryotic translation initiation factor 3 (eIF-3) complex, which is involved in protein synthesis of a specialized repertoire of mRNAs and, together with other initiation factors, stimulates binding of mRNA and methionyl-tRNAi to the 40S ribosome. The eIF-3 complex specifically targets and initiates translation of a subset of mRNAs involved in cell proliferation.</text>
</comment>
<comment type="subunit">
    <text evidence="1">Component of the eukaryotic translation initiation factor 3 (eIF-3) complex.</text>
</comment>
<comment type="subcellular location">
    <subcellularLocation>
        <location evidence="1">Cytoplasm</location>
    </subcellularLocation>
</comment>
<comment type="similarity">
    <text evidence="1">Belongs to the eIF-3 subunit I family.</text>
</comment>
<feature type="chain" id="PRO_0000365372" description="Eukaryotic translation initiation factor 3 subunit I">
    <location>
        <begin position="1"/>
        <end position="332"/>
    </location>
</feature>
<feature type="repeat" description="WD 1">
    <location>
        <begin position="8"/>
        <end position="47"/>
    </location>
</feature>
<feature type="repeat" description="WD 2">
    <location>
        <begin position="48"/>
        <end position="87"/>
    </location>
</feature>
<feature type="repeat" description="WD 3">
    <location>
        <begin position="144"/>
        <end position="182"/>
    </location>
</feature>
<feature type="repeat" description="WD 4">
    <location>
        <begin position="279"/>
        <end position="318"/>
    </location>
</feature>
<sequence>MRPILLSGHERALTQVKYNGDGDIIFSVSKDHVDADSHNGERIGTYHGHQGALWTVDVNPDSTLLATGGADNTLRLWEVQTGKLLHTWEFNTSIKRCEFSPDGRQLLGVTEKRSGHLSTIVVYEINPDPEAKQSDEQVLRIVCDESKATVAGFSYLAKYIISGHEDGSVTQWDGKTGELLSSNYDVHEPDMQGYALATKHVRFDANRVQLVDVEDLTVLKSYVTDTPLNSAAITPVKDYVILGGGQAAMDVTTTSARQGKFEARFYHKIFMEEIGRVRGHFGPLNYVAVHPQGTGYCSGGEDGYVRVHHFDKPYFDFMYEVEREAAREQANL</sequence>
<name>EIF3I_PHANO</name>